<feature type="chain" id="PRO_0000230929" description="Glucose-6-phosphate isomerase 1">
    <location>
        <begin position="1"/>
        <end position="545"/>
    </location>
</feature>
<feature type="active site" description="Proton donor" evidence="1">
    <location>
        <position position="356"/>
    </location>
</feature>
<feature type="active site" evidence="1">
    <location>
        <position position="387"/>
    </location>
</feature>
<feature type="active site" evidence="1">
    <location>
        <position position="508"/>
    </location>
</feature>
<reference key="1">
    <citation type="journal article" date="2010" name="PLoS ONE">
        <title>The complete multipartite genome sequence of Cupriavidus necator JMP134, a versatile pollutant degrader.</title>
        <authorList>
            <person name="Lykidis A."/>
            <person name="Perez-Pantoja D."/>
            <person name="Ledger T."/>
            <person name="Mavromatis K."/>
            <person name="Anderson I.J."/>
            <person name="Ivanova N.N."/>
            <person name="Hooper S.D."/>
            <person name="Lapidus A."/>
            <person name="Lucas S."/>
            <person name="Gonzalez B."/>
            <person name="Kyrpides N.C."/>
        </authorList>
    </citation>
    <scope>NUCLEOTIDE SEQUENCE [LARGE SCALE GENOMIC DNA]</scope>
    <source>
        <strain>JMP134 / LMG 1197</strain>
    </source>
</reference>
<organism>
    <name type="scientific">Cupriavidus pinatubonensis (strain JMP 134 / LMG 1197)</name>
    <name type="common">Cupriavidus necator (strain JMP 134)</name>
    <dbReference type="NCBI Taxonomy" id="264198"/>
    <lineage>
        <taxon>Bacteria</taxon>
        <taxon>Pseudomonadati</taxon>
        <taxon>Pseudomonadota</taxon>
        <taxon>Betaproteobacteria</taxon>
        <taxon>Burkholderiales</taxon>
        <taxon>Burkholderiaceae</taxon>
        <taxon>Cupriavidus</taxon>
    </lineage>
</organism>
<protein>
    <recommendedName>
        <fullName evidence="1">Glucose-6-phosphate isomerase 1</fullName>
        <shortName evidence="1">GPI 1</shortName>
        <ecNumber evidence="1">5.3.1.9</ecNumber>
    </recommendedName>
    <alternativeName>
        <fullName evidence="1">Phosphoglucose isomerase 1</fullName>
        <shortName evidence="1">PGI 1</shortName>
    </alternativeName>
    <alternativeName>
        <fullName evidence="1">Phosphohexose isomerase 1</fullName>
        <shortName evidence="1">PHI 1</shortName>
    </alternativeName>
</protein>
<proteinExistence type="inferred from homology"/>
<accession>Q472C7</accession>
<sequence>MPTNLHAWNALQQHHDAIRDHQMADWFAENGADRVRQFSLEAAGLYLDYSKNRITPQTMQLLLQLADEAGVPARRDAMFAGEHINATEDRAALHVALRATAGAGFKVDGVPVVPAIQNVLVRMRAFSEAVRSGAWTGTTGERITDVVNIGIGGSDLGPKMVCRALSHLAHDDGHSGPRMHFVSNVDGTELAEALERLDPRRTLMIVCSKTFTTLETMANAHSARQWYLDNGVAEDQLARHFVAVSTNVDAVRAFGIDPANMFEFWDWIGGRFSLWSSVGLSTALAVGFNAFADLLAGGRAMDEHFRTAPLERNMPVVLGMLGIWYRNFFNLPTSCMAPYSTSLELFPAFLQQLEMESNGKTVQLNGRRVRTHTSPVVWGTAGTNGQHAYFQMIHQGSQIVPVDFVAPLVPPRELPGHHAKLLANCFAQAEALMRGRSAEELRAAGMTDELRIAHMVFEGNRPSNTLLMEDLTPHVLGALIALYEHRTFVQGVVWNINSFDQWGVELGKILARPIESELNGAQAGSHDASTAALIARARGVLARNG</sequence>
<keyword id="KW-0963">Cytoplasm</keyword>
<keyword id="KW-0312">Gluconeogenesis</keyword>
<keyword id="KW-0324">Glycolysis</keyword>
<keyword id="KW-0413">Isomerase</keyword>
<comment type="function">
    <text evidence="1">Catalyzes the reversible isomerization of glucose-6-phosphate to fructose-6-phosphate.</text>
</comment>
<comment type="catalytic activity">
    <reaction evidence="1">
        <text>alpha-D-glucose 6-phosphate = beta-D-fructose 6-phosphate</text>
        <dbReference type="Rhea" id="RHEA:11816"/>
        <dbReference type="ChEBI" id="CHEBI:57634"/>
        <dbReference type="ChEBI" id="CHEBI:58225"/>
        <dbReference type="EC" id="5.3.1.9"/>
    </reaction>
</comment>
<comment type="pathway">
    <text evidence="1">Carbohydrate biosynthesis; gluconeogenesis.</text>
</comment>
<comment type="pathway">
    <text evidence="1">Carbohydrate degradation; glycolysis; D-glyceraldehyde 3-phosphate and glycerone phosphate from D-glucose: step 2/4.</text>
</comment>
<comment type="subcellular location">
    <subcellularLocation>
        <location evidence="1">Cytoplasm</location>
    </subcellularLocation>
</comment>
<comment type="similarity">
    <text evidence="1">Belongs to the GPI family.</text>
</comment>
<dbReference type="EC" id="5.3.1.9" evidence="1"/>
<dbReference type="EMBL" id="CP000090">
    <property type="protein sequence ID" value="AAZ60756.1"/>
    <property type="molecule type" value="Genomic_DNA"/>
</dbReference>
<dbReference type="SMR" id="Q472C7"/>
<dbReference type="STRING" id="264198.Reut_A1386"/>
<dbReference type="KEGG" id="reu:Reut_A1386"/>
<dbReference type="eggNOG" id="COG0166">
    <property type="taxonomic scope" value="Bacteria"/>
</dbReference>
<dbReference type="HOGENOM" id="CLU_017947_3_1_4"/>
<dbReference type="OrthoDB" id="140919at2"/>
<dbReference type="UniPathway" id="UPA00109">
    <property type="reaction ID" value="UER00181"/>
</dbReference>
<dbReference type="UniPathway" id="UPA00138"/>
<dbReference type="GO" id="GO:0005829">
    <property type="term" value="C:cytosol"/>
    <property type="evidence" value="ECO:0007669"/>
    <property type="project" value="TreeGrafter"/>
</dbReference>
<dbReference type="GO" id="GO:0097367">
    <property type="term" value="F:carbohydrate derivative binding"/>
    <property type="evidence" value="ECO:0007669"/>
    <property type="project" value="InterPro"/>
</dbReference>
<dbReference type="GO" id="GO:0004347">
    <property type="term" value="F:glucose-6-phosphate isomerase activity"/>
    <property type="evidence" value="ECO:0007669"/>
    <property type="project" value="UniProtKB-UniRule"/>
</dbReference>
<dbReference type="GO" id="GO:0048029">
    <property type="term" value="F:monosaccharide binding"/>
    <property type="evidence" value="ECO:0007669"/>
    <property type="project" value="TreeGrafter"/>
</dbReference>
<dbReference type="GO" id="GO:0006094">
    <property type="term" value="P:gluconeogenesis"/>
    <property type="evidence" value="ECO:0007669"/>
    <property type="project" value="UniProtKB-UniRule"/>
</dbReference>
<dbReference type="GO" id="GO:0051156">
    <property type="term" value="P:glucose 6-phosphate metabolic process"/>
    <property type="evidence" value="ECO:0007669"/>
    <property type="project" value="TreeGrafter"/>
</dbReference>
<dbReference type="GO" id="GO:0006096">
    <property type="term" value="P:glycolytic process"/>
    <property type="evidence" value="ECO:0007669"/>
    <property type="project" value="UniProtKB-UniRule"/>
</dbReference>
<dbReference type="CDD" id="cd05015">
    <property type="entry name" value="SIS_PGI_1"/>
    <property type="match status" value="1"/>
</dbReference>
<dbReference type="CDD" id="cd05016">
    <property type="entry name" value="SIS_PGI_2"/>
    <property type="match status" value="1"/>
</dbReference>
<dbReference type="FunFam" id="3.40.50.10490:FF:000018">
    <property type="entry name" value="Glucose-6-phosphate isomerase"/>
    <property type="match status" value="1"/>
</dbReference>
<dbReference type="Gene3D" id="1.10.1390.10">
    <property type="match status" value="1"/>
</dbReference>
<dbReference type="Gene3D" id="3.40.50.10490">
    <property type="entry name" value="Glucose-6-phosphate isomerase like protein, domain 1"/>
    <property type="match status" value="2"/>
</dbReference>
<dbReference type="HAMAP" id="MF_00473">
    <property type="entry name" value="G6P_isomerase"/>
    <property type="match status" value="1"/>
</dbReference>
<dbReference type="InterPro" id="IPR001672">
    <property type="entry name" value="G6P_Isomerase"/>
</dbReference>
<dbReference type="InterPro" id="IPR023096">
    <property type="entry name" value="G6P_Isomerase_C"/>
</dbReference>
<dbReference type="InterPro" id="IPR018189">
    <property type="entry name" value="Phosphoglucose_isomerase_CS"/>
</dbReference>
<dbReference type="InterPro" id="IPR046348">
    <property type="entry name" value="SIS_dom_sf"/>
</dbReference>
<dbReference type="InterPro" id="IPR035476">
    <property type="entry name" value="SIS_PGI_1"/>
</dbReference>
<dbReference type="InterPro" id="IPR035482">
    <property type="entry name" value="SIS_PGI_2"/>
</dbReference>
<dbReference type="NCBIfam" id="NF001211">
    <property type="entry name" value="PRK00179.1"/>
    <property type="match status" value="1"/>
</dbReference>
<dbReference type="PANTHER" id="PTHR11469">
    <property type="entry name" value="GLUCOSE-6-PHOSPHATE ISOMERASE"/>
    <property type="match status" value="1"/>
</dbReference>
<dbReference type="PANTHER" id="PTHR11469:SF1">
    <property type="entry name" value="GLUCOSE-6-PHOSPHATE ISOMERASE"/>
    <property type="match status" value="1"/>
</dbReference>
<dbReference type="Pfam" id="PF00342">
    <property type="entry name" value="PGI"/>
    <property type="match status" value="1"/>
</dbReference>
<dbReference type="PRINTS" id="PR00662">
    <property type="entry name" value="G6PISOMERASE"/>
</dbReference>
<dbReference type="SUPFAM" id="SSF53697">
    <property type="entry name" value="SIS domain"/>
    <property type="match status" value="1"/>
</dbReference>
<dbReference type="PROSITE" id="PS00765">
    <property type="entry name" value="P_GLUCOSE_ISOMERASE_1"/>
    <property type="match status" value="1"/>
</dbReference>
<dbReference type="PROSITE" id="PS00174">
    <property type="entry name" value="P_GLUCOSE_ISOMERASE_2"/>
    <property type="match status" value="1"/>
</dbReference>
<dbReference type="PROSITE" id="PS51463">
    <property type="entry name" value="P_GLUCOSE_ISOMERASE_3"/>
    <property type="match status" value="1"/>
</dbReference>
<name>G6PI1_CUPPJ</name>
<evidence type="ECO:0000255" key="1">
    <source>
        <dbReference type="HAMAP-Rule" id="MF_00473"/>
    </source>
</evidence>
<gene>
    <name evidence="1" type="primary">pgi1</name>
    <name type="ordered locus">Reut_A1386</name>
</gene>